<dbReference type="EC" id="7.1.1.2" evidence="1"/>
<dbReference type="EMBL" id="U83863">
    <property type="protein sequence ID" value="AAB87247.1"/>
    <property type="molecule type" value="Genomic_DNA"/>
</dbReference>
<dbReference type="SMR" id="O21610"/>
<dbReference type="GO" id="GO:0005743">
    <property type="term" value="C:mitochondrial inner membrane"/>
    <property type="evidence" value="ECO:0000250"/>
    <property type="project" value="UniProtKB"/>
</dbReference>
<dbReference type="GO" id="GO:0030964">
    <property type="term" value="C:NADH dehydrogenase complex"/>
    <property type="evidence" value="ECO:0007669"/>
    <property type="project" value="TreeGrafter"/>
</dbReference>
<dbReference type="GO" id="GO:0008137">
    <property type="term" value="F:NADH dehydrogenase (ubiquinone) activity"/>
    <property type="evidence" value="ECO:0000250"/>
    <property type="project" value="UniProtKB"/>
</dbReference>
<dbReference type="GO" id="GO:0006120">
    <property type="term" value="P:mitochondrial electron transport, NADH to ubiquinone"/>
    <property type="evidence" value="ECO:0000250"/>
    <property type="project" value="UniProtKB"/>
</dbReference>
<dbReference type="FunFam" id="1.20.58.1610:FF:000004">
    <property type="entry name" value="NADH-quinone oxidoreductase subunit A"/>
    <property type="match status" value="1"/>
</dbReference>
<dbReference type="Gene3D" id="1.20.58.1610">
    <property type="entry name" value="NADH:ubiquinone/plastoquinone oxidoreductase, chain 3"/>
    <property type="match status" value="1"/>
</dbReference>
<dbReference type="InterPro" id="IPR000440">
    <property type="entry name" value="NADH_UbQ/plastoQ_OxRdtase_su3"/>
</dbReference>
<dbReference type="InterPro" id="IPR038430">
    <property type="entry name" value="NDAH_ubi_oxred_su3_sf"/>
</dbReference>
<dbReference type="PANTHER" id="PTHR11058">
    <property type="entry name" value="NADH-UBIQUINONE OXIDOREDUCTASE CHAIN 3"/>
    <property type="match status" value="1"/>
</dbReference>
<dbReference type="PANTHER" id="PTHR11058:SF9">
    <property type="entry name" value="NADH-UBIQUINONE OXIDOREDUCTASE CHAIN 3"/>
    <property type="match status" value="1"/>
</dbReference>
<dbReference type="Pfam" id="PF00507">
    <property type="entry name" value="Oxidored_q4"/>
    <property type="match status" value="1"/>
</dbReference>
<keyword id="KW-0249">Electron transport</keyword>
<keyword id="KW-0472">Membrane</keyword>
<keyword id="KW-0496">Mitochondrion</keyword>
<keyword id="KW-0999">Mitochondrion inner membrane</keyword>
<keyword id="KW-0520">NAD</keyword>
<keyword id="KW-0679">Respiratory chain</keyword>
<keyword id="KW-1278">Translocase</keyword>
<keyword id="KW-0812">Transmembrane</keyword>
<keyword id="KW-1133">Transmembrane helix</keyword>
<keyword id="KW-0813">Transport</keyword>
<keyword id="KW-0830">Ubiquinone</keyword>
<comment type="function">
    <text evidence="1">Core subunit of the mitochondrial membrane respiratory chain NADH dehydrogenase (Complex I) which catalyzes electron transfer from NADH through the respiratory chain, using ubiquinone as an electron acceptor. Essential for the catalytic activity of complex I.</text>
</comment>
<comment type="catalytic activity">
    <reaction evidence="1">
        <text>a ubiquinone + NADH + 5 H(+)(in) = a ubiquinol + NAD(+) + 4 H(+)(out)</text>
        <dbReference type="Rhea" id="RHEA:29091"/>
        <dbReference type="Rhea" id="RHEA-COMP:9565"/>
        <dbReference type="Rhea" id="RHEA-COMP:9566"/>
        <dbReference type="ChEBI" id="CHEBI:15378"/>
        <dbReference type="ChEBI" id="CHEBI:16389"/>
        <dbReference type="ChEBI" id="CHEBI:17976"/>
        <dbReference type="ChEBI" id="CHEBI:57540"/>
        <dbReference type="ChEBI" id="CHEBI:57945"/>
        <dbReference type="EC" id="7.1.1.2"/>
    </reaction>
</comment>
<comment type="subunit">
    <text evidence="1">Core subunit of respiratory chain NADH dehydrogenase (Complex I) which is composed of 45 different subunits. Interacts with TMEM186. Interacts with TMEM242 (By similarity).</text>
</comment>
<comment type="subcellular location">
    <subcellularLocation>
        <location evidence="2">Mitochondrion inner membrane</location>
        <topology evidence="3">Multi-pass membrane protein</topology>
    </subcellularLocation>
</comment>
<comment type="similarity">
    <text evidence="4">Belongs to the complex I subunit 3 family.</text>
</comment>
<proteinExistence type="inferred from homology"/>
<reference key="1">
    <citation type="journal article" date="1998" name="Mol. Biol. Evol.">
        <title>Molecular systematics and paleobiogeography of the South American sigmodontine rodents.</title>
        <authorList>
            <person name="Engel S.R."/>
            <person name="Hogan K.M."/>
            <person name="Taylor J.F."/>
            <person name="Davis S.K."/>
        </authorList>
    </citation>
    <scope>NUCLEOTIDE SEQUENCE [GENOMIC DNA]</scope>
</reference>
<feature type="chain" id="PRO_0000117747" description="NADH-ubiquinone oxidoreductase chain 3">
    <location>
        <begin position="1"/>
        <end position="115"/>
    </location>
</feature>
<feature type="transmembrane region" description="Helical" evidence="3">
    <location>
        <begin position="4"/>
        <end position="24"/>
    </location>
</feature>
<feature type="transmembrane region" description="Helical" evidence="3">
    <location>
        <begin position="55"/>
        <end position="75"/>
    </location>
</feature>
<feature type="transmembrane region" description="Helical" evidence="3">
    <location>
        <begin position="87"/>
        <end position="107"/>
    </location>
</feature>
<gene>
    <name evidence="1" type="primary">MT-ND3</name>
    <name type="synonym">MTND3</name>
    <name type="synonym">NADH3</name>
    <name type="synonym">ND3</name>
</gene>
<organism>
    <name type="scientific">Habromys lophurus</name>
    <name type="common">Crested-tailed deer mouse</name>
    <dbReference type="NCBI Taxonomy" id="56319"/>
    <lineage>
        <taxon>Eukaryota</taxon>
        <taxon>Metazoa</taxon>
        <taxon>Chordata</taxon>
        <taxon>Craniata</taxon>
        <taxon>Vertebrata</taxon>
        <taxon>Euteleostomi</taxon>
        <taxon>Mammalia</taxon>
        <taxon>Eutheria</taxon>
        <taxon>Euarchontoglires</taxon>
        <taxon>Glires</taxon>
        <taxon>Rodentia</taxon>
        <taxon>Myomorpha</taxon>
        <taxon>Muroidea</taxon>
        <taxon>Cricetidae</taxon>
        <taxon>Neotominae</taxon>
        <taxon>Habromys</taxon>
    </lineage>
</organism>
<geneLocation type="mitochondrion"/>
<name>NU3M_HABLO</name>
<evidence type="ECO:0000250" key="1">
    <source>
        <dbReference type="UniProtKB" id="P03897"/>
    </source>
</evidence>
<evidence type="ECO:0000250" key="2">
    <source>
        <dbReference type="UniProtKB" id="P03898"/>
    </source>
</evidence>
<evidence type="ECO:0000255" key="3"/>
<evidence type="ECO:0000305" key="4"/>
<accession>O21610</accession>
<sequence>MNMLVALSVNIALSMCLITIAFWLPQLNMYTEKANPYECGFDPMSSARLPFSMKFFLVAITFLLFDLEIALLLPLPWAIQMNNINTMMLTSFILVSVLALGLAYEWMQKGLEWTE</sequence>
<protein>
    <recommendedName>
        <fullName evidence="1">NADH-ubiquinone oxidoreductase chain 3</fullName>
        <ecNumber evidence="1">7.1.1.2</ecNumber>
    </recommendedName>
    <alternativeName>
        <fullName>NADH dehydrogenase subunit 3</fullName>
    </alternativeName>
</protein>